<comment type="function">
    <text evidence="3">Transcription factor that binds and transactivates the sequence 5'-TAATC[CA]-3' which is found upstream of several photoreceptor-specific genes, including the opsin genes. Acts synergistically with other transcription factors, such as NRL, RORB and RAX, to regulate photoreceptor cell-specific gene transcription. Essential for the maintenance of mammalian photoreceptors.</text>
</comment>
<comment type="subunit">
    <text evidence="4 6">Interacts (via the homeobox) with NRL (via the leucine-zipper domain). Interacts with PDC, RAX2, RORB and SCA7.</text>
</comment>
<comment type="interaction">
    <interactant intactId="EBI-748171">
        <id>O43186</id>
    </interactant>
    <interactant intactId="EBI-740884">
        <id>Q9NRN7</id>
        <label>AASDHPPT</label>
    </interactant>
    <organismsDiffer>false</organismsDiffer>
    <experiments>3</experiments>
</comment>
<comment type="interaction">
    <interactant intactId="EBI-748171">
        <id>O43186</id>
    </interactant>
    <interactant intactId="EBI-743598">
        <id>Q9NYB9</id>
        <label>ABI2</label>
    </interactant>
    <organismsDiffer>false</organismsDiffer>
    <experiments>5</experiments>
</comment>
<comment type="interaction">
    <interactant intactId="EBI-748171">
        <id>O43186</id>
    </interactant>
    <interactant intactId="EBI-16431307">
        <id>K7EM05</id>
        <label>ACBD4</label>
    </interactant>
    <organismsDiffer>false</organismsDiffer>
    <experiments>3</experiments>
</comment>
<comment type="interaction">
    <interactant intactId="EBI-748171">
        <id>O43186</id>
    </interactant>
    <interactant intactId="EBI-8643161">
        <id>Q9NX04</id>
        <label>AIRIM</label>
    </interactant>
    <organismsDiffer>false</organismsDiffer>
    <experiments>3</experiments>
</comment>
<comment type="interaction">
    <interactant intactId="EBI-748171">
        <id>O43186</id>
    </interactant>
    <interactant intactId="EBI-711158">
        <id>O95376</id>
        <label>ARIH2</label>
    </interactant>
    <organismsDiffer>false</organismsDiffer>
    <experiments>3</experiments>
</comment>
<comment type="interaction">
    <interactant intactId="EBI-748171">
        <id>O43186</id>
    </interactant>
    <interactant intactId="EBI-746742">
        <id>O94817</id>
        <label>ATG12</label>
    </interactant>
    <organismsDiffer>false</organismsDiffer>
    <experiments>3</experiments>
</comment>
<comment type="interaction">
    <interactant intactId="EBI-748171">
        <id>O43186</id>
    </interactant>
    <interactant intactId="EBI-3923949">
        <id>Q8N8Y2</id>
        <label>ATP6V0D2</label>
    </interactant>
    <organismsDiffer>false</organismsDiffer>
    <experiments>3</experiments>
</comment>
<comment type="interaction">
    <interactant intactId="EBI-748171">
        <id>O43186</id>
    </interactant>
    <interactant intactId="EBI-930964">
        <id>P54253</id>
        <label>ATXN1</label>
    </interactant>
    <organismsDiffer>false</organismsDiffer>
    <experiments>3</experiments>
</comment>
<comment type="interaction">
    <interactant intactId="EBI-748171">
        <id>O43186</id>
    </interactant>
    <interactant intactId="EBI-11977289">
        <id>Q9H503-2</id>
        <label>BANF2</label>
    </interactant>
    <organismsDiffer>false</organismsDiffer>
    <experiments>3</experiments>
</comment>
<comment type="interaction">
    <interactant intactId="EBI-748171">
        <id>O43186</id>
    </interactant>
    <interactant intactId="EBI-16429704">
        <id>A0A0S2Z5G4</id>
        <label>BANP</label>
    </interactant>
    <organismsDiffer>false</organismsDiffer>
    <experiments>3</experiments>
</comment>
<comment type="interaction">
    <interactant intactId="EBI-748171">
        <id>O43186</id>
    </interactant>
    <interactant intactId="EBI-16429313">
        <id>B4DE54</id>
        <label>BANP</label>
    </interactant>
    <organismsDiffer>false</organismsDiffer>
    <experiments>3</experiments>
</comment>
<comment type="interaction">
    <interactant intactId="EBI-748171">
        <id>O43186</id>
    </interactant>
    <interactant intactId="EBI-11524452">
        <id>Q8N9N5-2</id>
        <label>BANP</label>
    </interactant>
    <organismsDiffer>false</organismsDiffer>
    <experiments>6</experiments>
</comment>
<comment type="interaction">
    <interactant intactId="EBI-748171">
        <id>O43186</id>
    </interactant>
    <interactant intactId="EBI-16429296">
        <id>Q8N9N5-7</id>
        <label>BANP</label>
    </interactant>
    <organismsDiffer>false</organismsDiffer>
    <experiments>3</experiments>
</comment>
<comment type="interaction">
    <interactant intactId="EBI-748171">
        <id>O43186</id>
    </interactant>
    <interactant intactId="EBI-12118438">
        <id>Q8IYS8</id>
        <label>BOD1L2</label>
    </interactant>
    <organismsDiffer>false</organismsDiffer>
    <experiments>3</experiments>
</comment>
<comment type="interaction">
    <interactant intactId="EBI-748171">
        <id>O43186</id>
    </interactant>
    <interactant intactId="EBI-741214">
        <id>Q9UFG5</id>
        <label>C19orf25</label>
    </interactant>
    <organismsDiffer>false</organismsDiffer>
    <experiments>3</experiments>
</comment>
<comment type="interaction">
    <interactant intactId="EBI-748171">
        <id>O43186</id>
    </interactant>
    <interactant intactId="EBI-2874661">
        <id>Q9BV19</id>
        <label>C1orf50</label>
    </interactant>
    <organismsDiffer>false</organismsDiffer>
    <experiments>3</experiments>
</comment>
<comment type="interaction">
    <interactant intactId="EBI-748171">
        <id>O43186</id>
    </interactant>
    <interactant intactId="EBI-2961725">
        <id>Q96LT7</id>
        <label>C9orf72</label>
    </interactant>
    <organismsDiffer>false</organismsDiffer>
    <experiments>3</experiments>
</comment>
<comment type="interaction">
    <interactant intactId="EBI-748171">
        <id>O43186</id>
    </interactant>
    <interactant intactId="EBI-718700">
        <id>P35219</id>
        <label>CA8</label>
    </interactant>
    <organismsDiffer>false</organismsDiffer>
    <experiments>7</experiments>
</comment>
<comment type="interaction">
    <interactant intactId="EBI-748171">
        <id>O43186</id>
    </interactant>
    <interactant intactId="EBI-395261">
        <id>P24863</id>
        <label>CCNC</label>
    </interactant>
    <organismsDiffer>false</organismsDiffer>
    <experiments>4</experiments>
</comment>
<comment type="interaction">
    <interactant intactId="EBI-748171">
        <id>O43186</id>
    </interactant>
    <interactant intactId="EBI-711290">
        <id>P42773</id>
        <label>CDKN2C</label>
    </interactant>
    <organismsDiffer>false</organismsDiffer>
    <experiments>3</experiments>
</comment>
<comment type="interaction">
    <interactant intactId="EBI-748171">
        <id>O43186</id>
    </interactant>
    <interactant intactId="EBI-749051">
        <id>Q8IYR0</id>
        <label>CFAP206</label>
    </interactant>
    <organismsDiffer>false</organismsDiffer>
    <experiments>3</experiments>
</comment>
<comment type="interaction">
    <interactant intactId="EBI-748171">
        <id>O43186</id>
    </interactant>
    <interactant intactId="EBI-12093053">
        <id>O43247-2</id>
        <label>CIMIP4</label>
    </interactant>
    <organismsDiffer>false</organismsDiffer>
    <experiments>3</experiments>
</comment>
<comment type="interaction">
    <interactant intactId="EBI-748171">
        <id>O43186</id>
    </interactant>
    <interactant intactId="EBI-11962928">
        <id>Q9UI47-2</id>
        <label>CTNNA3</label>
    </interactant>
    <organismsDiffer>false</organismsDiffer>
    <experiments>3</experiments>
</comment>
<comment type="interaction">
    <interactant intactId="EBI-748171">
        <id>O43186</id>
    </interactant>
    <interactant intactId="EBI-2805660">
        <id>Q14154</id>
        <label>DELE1</label>
    </interactant>
    <organismsDiffer>false</organismsDiffer>
    <experiments>3</experiments>
</comment>
<comment type="interaction">
    <interactant intactId="EBI-748171">
        <id>O43186</id>
    </interactant>
    <interactant intactId="EBI-373150">
        <id>P63241</id>
        <label>EIF5A</label>
    </interactant>
    <organismsDiffer>false</organismsDiffer>
    <experiments>3</experiments>
</comment>
<comment type="interaction">
    <interactant intactId="EBI-748171">
        <id>O43186</id>
    </interactant>
    <interactant intactId="EBI-12013806">
        <id>Q6NZ36-4</id>
        <label>FAAP20</label>
    </interactant>
    <organismsDiffer>false</organismsDiffer>
    <experiments>3</experiments>
</comment>
<comment type="interaction">
    <interactant intactId="EBI-748171">
        <id>O43186</id>
    </interactant>
    <interactant intactId="EBI-1759806">
        <id>O75593</id>
        <label>FOXH1</label>
    </interactant>
    <organismsDiffer>false</organismsDiffer>
    <experiments>3</experiments>
</comment>
<comment type="interaction">
    <interactant intactId="EBI-748171">
        <id>O43186</id>
    </interactant>
    <interactant intactId="EBI-10188645">
        <id>O75603</id>
        <label>GCM2</label>
    </interactant>
    <organismsDiffer>false</organismsDiffer>
    <experiments>11</experiments>
</comment>
<comment type="interaction">
    <interactant intactId="EBI-748171">
        <id>O43186</id>
    </interactant>
    <interactant intactId="EBI-7251368">
        <id>Q9BZE0</id>
        <label>GLIS2</label>
    </interactant>
    <organismsDiffer>false</organismsDiffer>
    <experiments>3</experiments>
</comment>
<comment type="interaction">
    <interactant intactId="EBI-748171">
        <id>O43186</id>
    </interactant>
    <interactant intactId="EBI-8293751">
        <id>Q96NT3</id>
        <label>GUCD1</label>
    </interactant>
    <organismsDiffer>false</organismsDiffer>
    <experiments>3</experiments>
</comment>
<comment type="interaction">
    <interactant intactId="EBI-748171">
        <id>O43186</id>
    </interactant>
    <interactant intactId="EBI-740553">
        <id>P13807</id>
        <label>GYS1</label>
    </interactant>
    <organismsDiffer>false</organismsDiffer>
    <experiments>3</experiments>
</comment>
<comment type="interaction">
    <interactant intactId="EBI-748171">
        <id>O43186</id>
    </interactant>
    <interactant intactId="EBI-740220">
        <id>O14964</id>
        <label>HGS</label>
    </interactant>
    <organismsDiffer>false</organismsDiffer>
    <experiments>6</experiments>
</comment>
<comment type="interaction">
    <interactant intactId="EBI-748171">
        <id>O43186</id>
    </interactant>
    <interactant intactId="EBI-2798841">
        <id>P35680</id>
        <label>HNF1B</label>
    </interactant>
    <organismsDiffer>false</organismsDiffer>
    <experiments>3</experiments>
</comment>
<comment type="interaction">
    <interactant intactId="EBI-748171">
        <id>O43186</id>
    </interactant>
    <interactant intactId="EBI-11955401">
        <id>Q86VF2-5</id>
        <label>IGFN1</label>
    </interactant>
    <organismsDiffer>false</organismsDiffer>
    <experiments>3</experiments>
</comment>
<comment type="interaction">
    <interactant intactId="EBI-748171">
        <id>O43186</id>
    </interactant>
    <interactant intactId="EBI-12100506">
        <id>P78412</id>
        <label>IRX6</label>
    </interactant>
    <organismsDiffer>false</organismsDiffer>
    <experiments>3</experiments>
</comment>
<comment type="interaction">
    <interactant intactId="EBI-748171">
        <id>O43186</id>
    </interactant>
    <interactant intactId="EBI-2556193">
        <id>Q63ZY3</id>
        <label>KANK2</label>
    </interactant>
    <organismsDiffer>false</organismsDiffer>
    <experiments>3</experiments>
</comment>
<comment type="interaction">
    <interactant intactId="EBI-748171">
        <id>O43186</id>
    </interactant>
    <interactant intactId="EBI-10247181">
        <id>Q5THT1</id>
        <label>KLHL32</label>
    </interactant>
    <organismsDiffer>false</organismsDiffer>
    <experiments>3</experiments>
</comment>
<comment type="interaction">
    <interactant intactId="EBI-748171">
        <id>O43186</id>
    </interactant>
    <interactant intactId="EBI-10255841">
        <id>Q71RC2-6</id>
        <label>LARP4</label>
    </interactant>
    <organismsDiffer>false</organismsDiffer>
    <experiments>3</experiments>
</comment>
<comment type="interaction">
    <interactant intactId="EBI-748171">
        <id>O43186</id>
    </interactant>
    <interactant intactId="EBI-1170392">
        <id>P17931</id>
        <label>LGALS3</label>
    </interactant>
    <organismsDiffer>false</organismsDiffer>
    <experiments>3</experiments>
</comment>
<comment type="interaction">
    <interactant intactId="EBI-748171">
        <id>O43186</id>
    </interactant>
    <interactant intactId="EBI-10196832">
        <id>P0CW20</id>
        <label>LIMS4</label>
    </interactant>
    <organismsDiffer>false</organismsDiffer>
    <experiments>3</experiments>
</comment>
<comment type="interaction">
    <interactant intactId="EBI-748171">
        <id>O43186</id>
    </interactant>
    <interactant intactId="EBI-739832">
        <id>Q8TBB1</id>
        <label>LNX1</label>
    </interactant>
    <organismsDiffer>false</organismsDiffer>
    <experiments>3</experiments>
</comment>
<comment type="interaction">
    <interactant intactId="EBI-748171">
        <id>O43186</id>
    </interactant>
    <interactant intactId="EBI-2341787">
        <id>Q17RB8</id>
        <label>LONRF1</label>
    </interactant>
    <organismsDiffer>false</organismsDiffer>
    <experiments>5</experiments>
</comment>
<comment type="interaction">
    <interactant intactId="EBI-748171">
        <id>O43186</id>
    </interactant>
    <interactant intactId="EBI-748182">
        <id>Q8TC57</id>
        <label>M1AP</label>
    </interactant>
    <organismsDiffer>false</organismsDiffer>
    <experiments>4</experiments>
</comment>
<comment type="interaction">
    <interactant intactId="EBI-748171">
        <id>O43186</id>
    </interactant>
    <interactant intactId="EBI-12022316">
        <id>Q9BUN1</id>
        <label>MENT</label>
    </interactant>
    <organismsDiffer>false</organismsDiffer>
    <experiments>3</experiments>
</comment>
<comment type="interaction">
    <interactant intactId="EBI-748171">
        <id>O43186</id>
    </interactant>
    <interactant intactId="EBI-5773143">
        <id>Q6P2C6</id>
        <label>MLLT6</label>
    </interactant>
    <organismsDiffer>false</organismsDiffer>
    <experiments>3</experiments>
</comment>
<comment type="interaction">
    <interactant intactId="EBI-748171">
        <id>O43186</id>
    </interactant>
    <interactant intactId="EBI-7950783">
        <id>Q96JP2</id>
        <label>MYO15B</label>
    </interactant>
    <organismsDiffer>false</organismsDiffer>
    <experiments>3</experiments>
</comment>
<comment type="interaction">
    <interactant intactId="EBI-748171">
        <id>O43186</id>
    </interactant>
    <interactant intactId="EBI-744402">
        <id>Q9NP98</id>
        <label>MYOZ1</label>
    </interactant>
    <organismsDiffer>false</organismsDiffer>
    <experiments>3</experiments>
</comment>
<comment type="interaction">
    <interactant intactId="EBI-748171">
        <id>O43186</id>
    </interactant>
    <interactant intactId="EBI-10281234">
        <id>Q969S2</id>
        <label>NEIL2</label>
    </interactant>
    <organismsDiffer>false</organismsDiffer>
    <experiments>3</experiments>
</comment>
<comment type="interaction">
    <interactant intactId="EBI-748171">
        <id>O43186</id>
    </interactant>
    <interactant intactId="EBI-11956831">
        <id>Q13952-2</id>
        <label>NFYC</label>
    </interactant>
    <organismsDiffer>false</organismsDiffer>
    <experiments>3</experiments>
</comment>
<comment type="interaction">
    <interactant intactId="EBI-748171">
        <id>O43186</id>
    </interactant>
    <interactant intactId="EBI-749003">
        <id>Q9Y221</id>
        <label>NIP7</label>
    </interactant>
    <organismsDiffer>false</organismsDiffer>
    <experiments>3</experiments>
</comment>
<comment type="interaction">
    <interactant intactId="EBI-748171">
        <id>O43186</id>
    </interactant>
    <interactant intactId="EBI-3907456">
        <id>P34130</id>
        <label>NTF4</label>
    </interactant>
    <organismsDiffer>false</organismsDiffer>
    <experiments>3</experiments>
</comment>
<comment type="interaction">
    <interactant intactId="EBI-748171">
        <id>O43186</id>
    </interactant>
    <interactant intactId="EBI-12176191">
        <id>O95007</id>
        <label>OR6B1</label>
    </interactant>
    <organismsDiffer>false</organismsDiffer>
    <experiments>3</experiments>
</comment>
<comment type="interaction">
    <interactant intactId="EBI-748171">
        <id>O43186</id>
    </interactant>
    <interactant intactId="EBI-9057006">
        <id>Q9UJX0</id>
        <label>OSGIN1</label>
    </interactant>
    <organismsDiffer>false</organismsDiffer>
    <experiments>3</experiments>
</comment>
<comment type="interaction">
    <interactant intactId="EBI-748171">
        <id>O43186</id>
    </interactant>
    <interactant intactId="EBI-10256685">
        <id>Q7Z2X4</id>
        <label>PID1</label>
    </interactant>
    <organismsDiffer>false</organismsDiffer>
    <experiments>3</experiments>
</comment>
<comment type="interaction">
    <interactant intactId="EBI-748171">
        <id>O43186</id>
    </interactant>
    <interactant intactId="EBI-721270">
        <id>P0CW24</id>
        <label>PNMA6A</label>
    </interactant>
    <organismsDiffer>false</organismsDiffer>
    <experiments>3</experiments>
</comment>
<comment type="interaction">
    <interactant intactId="EBI-748171">
        <id>O43186</id>
    </interactant>
    <interactant intactId="EBI-1389308">
        <id>Q7Z3K3</id>
        <label>POGZ</label>
    </interactant>
    <organismsDiffer>false</organismsDiffer>
    <experiments>3</experiments>
</comment>
<comment type="interaction">
    <interactant intactId="EBI-748171">
        <id>O43186</id>
    </interactant>
    <interactant intactId="EBI-10293968">
        <id>Q96T49</id>
        <label>PPP1R16B</label>
    </interactant>
    <organismsDiffer>false</organismsDiffer>
    <experiments>4</experiments>
</comment>
<comment type="interaction">
    <interactant intactId="EBI-748171">
        <id>O43186</id>
    </interactant>
    <interactant intactId="EBI-1053424">
        <id>O43741</id>
        <label>PRKAB2</label>
    </interactant>
    <organismsDiffer>false</organismsDiffer>
    <experiments>9</experiments>
</comment>
<comment type="interaction">
    <interactant intactId="EBI-748171">
        <id>O43186</id>
    </interactant>
    <interactant intactId="EBI-11986293">
        <id>P0CG20</id>
        <label>PRR35</label>
    </interactant>
    <organismsDiffer>false</organismsDiffer>
    <experiments>3</experiments>
</comment>
<comment type="interaction">
    <interactant intactId="EBI-748171">
        <id>O43186</id>
    </interactant>
    <interactant intactId="EBI-359352">
        <id>P25786</id>
        <label>PSMA1</label>
    </interactant>
    <organismsDiffer>false</organismsDiffer>
    <experiments>3</experiments>
</comment>
<comment type="interaction">
    <interactant intactId="EBI-748171">
        <id>O43186</id>
    </interactant>
    <interactant intactId="EBI-603329">
        <id>P40306</id>
        <label>PSMB10</label>
    </interactant>
    <organismsDiffer>false</organismsDiffer>
    <experiments>3</experiments>
</comment>
<comment type="interaction">
    <interactant intactId="EBI-748171">
        <id>O43186</id>
    </interactant>
    <interactant intactId="EBI-2798044">
        <id>Q2TAL8</id>
        <label>QRICH1</label>
    </interactant>
    <organismsDiffer>false</organismsDiffer>
    <experiments>6</experiments>
</comment>
<comment type="interaction">
    <interactant intactId="EBI-748171">
        <id>O43186</id>
    </interactant>
    <interactant intactId="EBI-372094">
        <id>Q9BQY4</id>
        <label>RHOXF2</label>
    </interactant>
    <organismsDiffer>false</organismsDiffer>
    <experiments>3</experiments>
</comment>
<comment type="interaction">
    <interactant intactId="EBI-748171">
        <id>O43186</id>
    </interactant>
    <interactant intactId="EBI-10172778">
        <id>A1L4F5</id>
        <label>ROR2</label>
    </interactant>
    <organismsDiffer>false</organismsDiffer>
    <experiments>3</experiments>
</comment>
<comment type="interaction">
    <interactant intactId="EBI-748171">
        <id>O43186</id>
    </interactant>
    <interactant intactId="EBI-6422642">
        <id>Q01974</id>
        <label>ROR2</label>
    </interactant>
    <organismsDiffer>false</organismsDiffer>
    <experiments>4</experiments>
</comment>
<comment type="interaction">
    <interactant intactId="EBI-748171">
        <id>O43186</id>
    </interactant>
    <interactant intactId="EBI-743154">
        <id>Q9UBE0</id>
        <label>SAE1</label>
    </interactant>
    <organismsDiffer>false</organismsDiffer>
    <experiments>3</experiments>
</comment>
<comment type="interaction">
    <interactant intactId="EBI-748171">
        <id>O43186</id>
    </interactant>
    <interactant intactId="EBI-727004">
        <id>O00560</id>
        <label>SDCBP</label>
    </interactant>
    <organismsDiffer>false</organismsDiffer>
    <experiments>3</experiments>
</comment>
<comment type="interaction">
    <interactant intactId="EBI-748171">
        <id>O43186</id>
    </interactant>
    <interactant intactId="EBI-10320311">
        <id>Q9UDX3</id>
        <label>SEC14L4</label>
    </interactant>
    <organismsDiffer>false</organismsDiffer>
    <experiments>3</experiments>
</comment>
<comment type="interaction">
    <interactant intactId="EBI-748171">
        <id>O43186</id>
    </interactant>
    <interactant intactId="EBI-347161">
        <id>P84022</id>
        <label>SMAD3</label>
    </interactant>
    <organismsDiffer>false</organismsDiffer>
    <experiments>3</experiments>
</comment>
<comment type="interaction">
    <interactant intactId="EBI-748171">
        <id>O43186</id>
    </interactant>
    <interactant intactId="EBI-12061577">
        <id>Q8IYB5-2</id>
        <label>SMAP1</label>
    </interactant>
    <organismsDiffer>false</organismsDiffer>
    <experiments>3</experiments>
</comment>
<comment type="interaction">
    <interactant intactId="EBI-748171">
        <id>O43186</id>
    </interactant>
    <interactant intactId="EBI-2822515">
        <id>Q8WU79</id>
        <label>SMAP2</label>
    </interactant>
    <organismsDiffer>false</organismsDiffer>
    <experiments>3</experiments>
</comment>
<comment type="interaction">
    <interactant intactId="EBI-748171">
        <id>O43186</id>
    </interactant>
    <interactant intactId="EBI-749970">
        <id>Q53HV7</id>
        <label>SMUG1</label>
    </interactant>
    <organismsDiffer>false</organismsDiffer>
    <experiments>3</experiments>
</comment>
<comment type="interaction">
    <interactant intactId="EBI-748171">
        <id>O43186</id>
    </interactant>
    <interactant intactId="EBI-1167533">
        <id>P56693</id>
        <label>SOX10</label>
    </interactant>
    <organismsDiffer>false</organismsDiffer>
    <experiments>3</experiments>
</comment>
<comment type="interaction">
    <interactant intactId="EBI-748171">
        <id>O43186</id>
    </interactant>
    <interactant intactId="EBI-9087806">
        <id>O95416</id>
        <label>SOX14</label>
    </interactant>
    <organismsDiffer>false</organismsDiffer>
    <experiments>3</experiments>
</comment>
<comment type="interaction">
    <interactant intactId="EBI-748171">
        <id>O43186</id>
    </interactant>
    <interactant intactId="EBI-9078386">
        <id>P41225</id>
        <label>SOX3</label>
    </interactant>
    <organismsDiffer>false</organismsDiffer>
    <experiments>3</experiments>
</comment>
<comment type="interaction">
    <interactant intactId="EBI-748171">
        <id>O43186</id>
    </interactant>
    <interactant intactId="EBI-3505701">
        <id>P35711</id>
        <label>SOX5</label>
    </interactant>
    <organismsDiffer>false</organismsDiffer>
    <experiments>4</experiments>
</comment>
<comment type="interaction">
    <interactant intactId="EBI-748171">
        <id>O43186</id>
    </interactant>
    <interactant intactId="EBI-11954419">
        <id>P35711-4</id>
        <label>SOX5</label>
    </interactant>
    <organismsDiffer>false</organismsDiffer>
    <experiments>3</experiments>
</comment>
<comment type="interaction">
    <interactant intactId="EBI-748171">
        <id>O43186</id>
    </interactant>
    <interactant intactId="EBI-742688">
        <id>Q9NZD8</id>
        <label>SPG21</label>
    </interactant>
    <organismsDiffer>false</organismsDiffer>
    <experiments>3</experiments>
</comment>
<comment type="interaction">
    <interactant intactId="EBI-748171">
        <id>O43186</id>
    </interactant>
    <interactant intactId="EBI-749295">
        <id>O75716</id>
        <label>STK16</label>
    </interactant>
    <organismsDiffer>false</organismsDiffer>
    <experiments>3</experiments>
</comment>
<comment type="interaction">
    <interactant intactId="EBI-748171">
        <id>O43186</id>
    </interactant>
    <interactant intactId="EBI-740595">
        <id>Q9UMX1</id>
        <label>SUFU</label>
    </interactant>
    <organismsDiffer>false</organismsDiffer>
    <experiments>3</experiments>
</comment>
<comment type="interaction">
    <interactant intactId="EBI-748171">
        <id>O43186</id>
    </interactant>
    <interactant intactId="EBI-3921347">
        <id>P51687</id>
        <label>SUOX</label>
    </interactant>
    <organismsDiffer>false</organismsDiffer>
    <experiments>3</experiments>
</comment>
<comment type="interaction">
    <interactant intactId="EBI-748171">
        <id>O43186</id>
    </interactant>
    <interactant intactId="EBI-10245139">
        <id>Q5T011-5</id>
        <label>SZT2</label>
    </interactant>
    <organismsDiffer>false</organismsDiffer>
    <experiments>3</experiments>
</comment>
<comment type="interaction">
    <interactant intactId="EBI-748171">
        <id>O43186</id>
    </interactant>
    <interactant intactId="EBI-2824328">
        <id>O95947</id>
        <label>TBX6</label>
    </interactant>
    <organismsDiffer>false</organismsDiffer>
    <experiments>3</experiments>
</comment>
<comment type="interaction">
    <interactant intactId="EBI-748171">
        <id>O43186</id>
    </interactant>
    <interactant intactId="EBI-11746252">
        <id>Q9NQB0-10</id>
        <label>TCF7L2</label>
    </interactant>
    <organismsDiffer>false</organismsDiffer>
    <experiments>3</experiments>
</comment>
<comment type="interaction">
    <interactant intactId="EBI-748171">
        <id>O43186</id>
    </interactant>
    <interactant intactId="EBI-357061">
        <id>Q92734</id>
        <label>TFG</label>
    </interactant>
    <organismsDiffer>false</organismsDiffer>
    <experiments>3</experiments>
</comment>
<comment type="interaction">
    <interactant intactId="EBI-748171">
        <id>O43186</id>
    </interactant>
    <interactant intactId="EBI-717810">
        <id>Q08117</id>
        <label>TLE5</label>
    </interactant>
    <organismsDiffer>false</organismsDiffer>
    <experiments>3</experiments>
</comment>
<comment type="interaction">
    <interactant intactId="EBI-748171">
        <id>O43186</id>
    </interactant>
    <interactant intactId="EBI-11741437">
        <id>Q08117-2</id>
        <label>TLE5</label>
    </interactant>
    <organismsDiffer>false</organismsDiffer>
    <experiments>3</experiments>
</comment>
<comment type="interaction">
    <interactant intactId="EBI-748171">
        <id>O43186</id>
    </interactant>
    <interactant intactId="EBI-3939165">
        <id>O43711</id>
        <label>TLX3</label>
    </interactant>
    <organismsDiffer>false</organismsDiffer>
    <experiments>3</experiments>
</comment>
<comment type="interaction">
    <interactant intactId="EBI-748171">
        <id>O43186</id>
    </interactant>
    <interactant intactId="EBI-949753">
        <id>Q63HR2</id>
        <label>TNS2</label>
    </interactant>
    <organismsDiffer>false</organismsDiffer>
    <experiments>3</experiments>
</comment>
<comment type="interaction">
    <interactant intactId="EBI-748171">
        <id>O43186</id>
    </interactant>
    <interactant intactId="EBI-1993619">
        <id>Q14CS0</id>
        <label>UBXN2B</label>
    </interactant>
    <organismsDiffer>false</organismsDiffer>
    <experiments>3</experiments>
</comment>
<comment type="interaction">
    <interactant intactId="EBI-748171">
        <id>O43186</id>
    </interactant>
    <interactant intactId="EBI-1993627">
        <id>O94888</id>
        <label>UBXN7</label>
    </interactant>
    <organismsDiffer>false</organismsDiffer>
    <experiments>3</experiments>
</comment>
<comment type="interaction">
    <interactant intactId="EBI-748171">
        <id>O43186</id>
    </interactant>
    <interactant intactId="EBI-2559305">
        <id>A5D8V6</id>
        <label>VPS37C</label>
    </interactant>
    <organismsDiffer>false</organismsDiffer>
    <experiments>3</experiments>
</comment>
<comment type="interaction">
    <interactant intactId="EBI-748171">
        <id>O43186</id>
    </interactant>
    <interactant intactId="EBI-742550">
        <id>Q96K80</id>
        <label>ZC3H10</label>
    </interactant>
    <organismsDiffer>false</organismsDiffer>
    <experiments>3</experiments>
</comment>
<comment type="interaction">
    <interactant intactId="EBI-748171">
        <id>O43186</id>
    </interactant>
    <interactant intactId="EBI-11963196">
        <id>Q15915</id>
        <label>ZIC1</label>
    </interactant>
    <organismsDiffer>false</organismsDiffer>
    <experiments>3</experiments>
</comment>
<comment type="interaction">
    <interactant intactId="EBI-748171">
        <id>O43186</id>
    </interactant>
    <interactant intactId="EBI-10196963">
        <id>Q6P088</id>
        <label>ZNF483</label>
    </interactant>
    <organismsDiffer>false</organismsDiffer>
    <experiments>3</experiments>
</comment>
<comment type="interaction">
    <interactant intactId="EBI-748171">
        <id>O43186</id>
    </interactant>
    <interactant intactId="EBI-16429989">
        <id>A0A0S2Z6P0</id>
        <label>ZNF688</label>
    </interactant>
    <organismsDiffer>false</organismsDiffer>
    <experiments>3</experiments>
</comment>
<comment type="interaction">
    <interactant intactId="EBI-748171">
        <id>O43186</id>
    </interactant>
    <interactant intactId="EBI-9676218">
        <id>P03410</id>
        <label>tax</label>
    </interactant>
    <organismsDiffer>true</organismsDiffer>
    <experiments>3</experiments>
</comment>
<comment type="subcellular location">
    <subcellularLocation>
        <location evidence="1">Nucleus</location>
    </subcellularLocation>
</comment>
<comment type="tissue specificity">
    <text>Retina.</text>
</comment>
<comment type="disease" evidence="4 9 10 14 15">
    <disease id="DI-00635">
        <name>Leber congenital amaurosis 7</name>
        <acronym>LCA7</acronym>
        <description>A severe dystrophy of the retina, typically becoming evident in the first years of life. Visual function is usually poor and often accompanied by nystagmus, sluggish or near-absent pupillary responses, photophobia, high hyperopia and keratoconus.</description>
        <dbReference type="MIM" id="613829"/>
    </disease>
    <text>The disease is caused by variants affecting the gene represented in this entry.</text>
</comment>
<comment type="disease" evidence="4 12 13 14">
    <disease id="DI-00318">
        <name>Cone-rod dystrophy 2</name>
        <acronym>CORD2</acronym>
        <description>An inherited retinal dystrophy characterized by retinal pigment deposits visible on fundus examination, predominantly in the macular region, and initial loss of cone photoreceptors followed by rod degeneration. This leads to decreased visual acuity and sensitivity in the central visual field, followed by loss of peripheral vision. Severe loss of vision occurs earlier than in retinitis pigmentosa, due to cone photoreceptors degenerating at a higher rate than rod photoreceptors.</description>
        <dbReference type="MIM" id="120970"/>
    </disease>
    <text>The disease is caused by variants affecting the gene represented in this entry.</text>
</comment>
<comment type="disease" evidence="5 13 14">
    <disease id="DI-00969">
        <name>Retinitis pigmentosa</name>
        <acronym>RP</acronym>
        <description>A retinal dystrophy belonging to the group of pigmentary retinopathies. Retinitis pigmentosa is characterized by retinal pigment deposits visible on fundus examination and primary loss of rod photoreceptor cells followed by secondary loss of cone photoreceptors. Patients typically have night vision blindness and loss of midperipheral visual field. As their condition progresses, they lose their far peripheral visual field and eventually central vision as well. Retinitis pigmentosa can be inherited as an autosomal dominant, autosomal recessive or X-linked condition.</description>
        <dbReference type="MIM" id="268000"/>
    </disease>
    <text>The disease is caused by variants affecting the gene represented in this entry.</text>
</comment>
<comment type="similarity">
    <text evidence="16">Belongs to the paired homeobox family.</text>
</comment>
<dbReference type="EMBL" id="AF024711">
    <property type="protein sequence ID" value="AAB88418.1"/>
    <property type="molecule type" value="Genomic_DNA"/>
</dbReference>
<dbReference type="EMBL" id="BT007364">
    <property type="protein sequence ID" value="AAP36028.1"/>
    <property type="molecule type" value="mRNA"/>
</dbReference>
<dbReference type="EMBL" id="AC008745">
    <property type="status" value="NOT_ANNOTATED_CDS"/>
    <property type="molecule type" value="Genomic_DNA"/>
</dbReference>
<dbReference type="EMBL" id="BC016664">
    <property type="status" value="NOT_ANNOTATED_CDS"/>
    <property type="molecule type" value="mRNA"/>
</dbReference>
<dbReference type="EMBL" id="BC053672">
    <property type="status" value="NOT_ANNOTATED_CDS"/>
    <property type="molecule type" value="mRNA"/>
</dbReference>
<dbReference type="EMBL" id="DQ426868">
    <property type="protein sequence ID" value="ABD90533.1"/>
    <property type="molecule type" value="mRNA"/>
</dbReference>
<dbReference type="CCDS" id="CCDS12706.1"/>
<dbReference type="RefSeq" id="NP_000545.1">
    <property type="nucleotide sequence ID" value="NM_000554.6"/>
</dbReference>
<dbReference type="PDB" id="9B8U">
    <property type="method" value="X-ray"/>
    <property type="resolution" value="2.90 A"/>
    <property type="chains" value="A/B/C/D=31-107"/>
</dbReference>
<dbReference type="PDBsum" id="9B8U"/>
<dbReference type="SASBDB" id="O43186"/>
<dbReference type="SMR" id="O43186"/>
<dbReference type="BioGRID" id="107796">
    <property type="interactions" value="255"/>
</dbReference>
<dbReference type="CORUM" id="O43186"/>
<dbReference type="FunCoup" id="O43186">
    <property type="interactions" value="246"/>
</dbReference>
<dbReference type="IntAct" id="O43186">
    <property type="interactions" value="111"/>
</dbReference>
<dbReference type="MINT" id="O43186"/>
<dbReference type="STRING" id="9606.ENSP00000221996"/>
<dbReference type="iPTMnet" id="O43186"/>
<dbReference type="PhosphoSitePlus" id="O43186"/>
<dbReference type="BioMuta" id="CRX"/>
<dbReference type="MassIVE" id="O43186"/>
<dbReference type="PaxDb" id="9606-ENSP00000221996"/>
<dbReference type="PeptideAtlas" id="O43186"/>
<dbReference type="ProteomicsDB" id="48803"/>
<dbReference type="Antibodypedia" id="31635">
    <property type="antibodies" value="260 antibodies from 32 providers"/>
</dbReference>
<dbReference type="DNASU" id="1406"/>
<dbReference type="Ensembl" id="ENST00000221996.12">
    <property type="protein sequence ID" value="ENSP00000221996.5"/>
    <property type="gene ID" value="ENSG00000105392.17"/>
</dbReference>
<dbReference type="GeneID" id="1406"/>
<dbReference type="KEGG" id="hsa:1406"/>
<dbReference type="MANE-Select" id="ENST00000221996.12">
    <property type="protein sequence ID" value="ENSP00000221996.5"/>
    <property type="RefSeq nucleotide sequence ID" value="NM_000554.6"/>
    <property type="RefSeq protein sequence ID" value="NP_000545.1"/>
</dbReference>
<dbReference type="UCSC" id="uc002phq.5">
    <property type="organism name" value="human"/>
</dbReference>
<dbReference type="AGR" id="HGNC:2383"/>
<dbReference type="CTD" id="1406"/>
<dbReference type="DisGeNET" id="1406"/>
<dbReference type="GeneCards" id="CRX"/>
<dbReference type="GeneReviews" id="CRX"/>
<dbReference type="HGNC" id="HGNC:2383">
    <property type="gene designation" value="CRX"/>
</dbReference>
<dbReference type="HPA" id="ENSG00000105392">
    <property type="expression patterns" value="Tissue enriched (retina)"/>
</dbReference>
<dbReference type="MalaCards" id="CRX"/>
<dbReference type="MIM" id="120970">
    <property type="type" value="phenotype"/>
</dbReference>
<dbReference type="MIM" id="268000">
    <property type="type" value="phenotype"/>
</dbReference>
<dbReference type="MIM" id="602225">
    <property type="type" value="gene"/>
</dbReference>
<dbReference type="MIM" id="613829">
    <property type="type" value="phenotype"/>
</dbReference>
<dbReference type="neXtProt" id="NX_O43186"/>
<dbReference type="OpenTargets" id="ENSG00000105392"/>
<dbReference type="Orphanet" id="1872">
    <property type="disease" value="Cone rod dystrophy"/>
</dbReference>
<dbReference type="Orphanet" id="65">
    <property type="disease" value="Leber congenital amaurosis"/>
</dbReference>
<dbReference type="Orphanet" id="791">
    <property type="disease" value="Retinitis pigmentosa"/>
</dbReference>
<dbReference type="PharmGKB" id="PA26903"/>
<dbReference type="VEuPathDB" id="HostDB:ENSG00000105392"/>
<dbReference type="eggNOG" id="KOG2251">
    <property type="taxonomic scope" value="Eukaryota"/>
</dbReference>
<dbReference type="GeneTree" id="ENSGT00940000161634"/>
<dbReference type="HOGENOM" id="CLU_064370_0_0_1"/>
<dbReference type="InParanoid" id="O43186"/>
<dbReference type="OMA" id="TWKFAYN"/>
<dbReference type="OrthoDB" id="6159439at2759"/>
<dbReference type="PAN-GO" id="O43186">
    <property type="GO annotations" value="4 GO annotations based on evolutionary models"/>
</dbReference>
<dbReference type="PhylomeDB" id="O43186"/>
<dbReference type="TreeFam" id="TF351179"/>
<dbReference type="PathwayCommons" id="O43186"/>
<dbReference type="SignaLink" id="O43186"/>
<dbReference type="SIGNOR" id="O43186"/>
<dbReference type="BioGRID-ORCS" id="1406">
    <property type="hits" value="18 hits in 1172 CRISPR screens"/>
</dbReference>
<dbReference type="ChiTaRS" id="CRX">
    <property type="organism name" value="human"/>
</dbReference>
<dbReference type="GeneWiki" id="CRX_(gene)"/>
<dbReference type="GenomeRNAi" id="1406"/>
<dbReference type="Pharos" id="O43186">
    <property type="development level" value="Tbio"/>
</dbReference>
<dbReference type="PRO" id="PR:O43186"/>
<dbReference type="Proteomes" id="UP000005640">
    <property type="component" value="Chromosome 19"/>
</dbReference>
<dbReference type="RNAct" id="O43186">
    <property type="molecule type" value="protein"/>
</dbReference>
<dbReference type="Bgee" id="ENSG00000105392">
    <property type="expression patterns" value="Expressed in pigmented layer of retina and 38 other cell types or tissues"/>
</dbReference>
<dbReference type="ExpressionAtlas" id="O43186">
    <property type="expression patterns" value="baseline and differential"/>
</dbReference>
<dbReference type="GO" id="GO:0000785">
    <property type="term" value="C:chromatin"/>
    <property type="evidence" value="ECO:0000250"/>
    <property type="project" value="ARUK-UCL"/>
</dbReference>
<dbReference type="GO" id="GO:0005634">
    <property type="term" value="C:nucleus"/>
    <property type="evidence" value="ECO:0000250"/>
    <property type="project" value="UniProtKB"/>
</dbReference>
<dbReference type="GO" id="GO:0090575">
    <property type="term" value="C:RNA polymerase II transcription regulator complex"/>
    <property type="evidence" value="ECO:0000250"/>
    <property type="project" value="ARUK-UCL"/>
</dbReference>
<dbReference type="GO" id="GO:0003682">
    <property type="term" value="F:chromatin binding"/>
    <property type="evidence" value="ECO:0007669"/>
    <property type="project" value="Ensembl"/>
</dbReference>
<dbReference type="GO" id="GO:0001216">
    <property type="term" value="F:DNA-binding transcription activator activity"/>
    <property type="evidence" value="ECO:0000250"/>
    <property type="project" value="ARUK-UCL"/>
</dbReference>
<dbReference type="GO" id="GO:0001228">
    <property type="term" value="F:DNA-binding transcription activator activity, RNA polymerase II-specific"/>
    <property type="evidence" value="ECO:0000314"/>
    <property type="project" value="NTNU_SB"/>
</dbReference>
<dbReference type="GO" id="GO:0003700">
    <property type="term" value="F:DNA-binding transcription factor activity"/>
    <property type="evidence" value="ECO:0000250"/>
    <property type="project" value="UniProtKB"/>
</dbReference>
<dbReference type="GO" id="GO:0000981">
    <property type="term" value="F:DNA-binding transcription factor activity, RNA polymerase II-specific"/>
    <property type="evidence" value="ECO:0000247"/>
    <property type="project" value="NTNU_SB"/>
</dbReference>
<dbReference type="GO" id="GO:0043522">
    <property type="term" value="F:leucine zipper domain binding"/>
    <property type="evidence" value="ECO:0000353"/>
    <property type="project" value="UniProtKB"/>
</dbReference>
<dbReference type="GO" id="GO:0016922">
    <property type="term" value="F:nuclear receptor binding"/>
    <property type="evidence" value="ECO:0000250"/>
    <property type="project" value="UniProtKB"/>
</dbReference>
<dbReference type="GO" id="GO:0000978">
    <property type="term" value="F:RNA polymerase II cis-regulatory region sequence-specific DNA binding"/>
    <property type="evidence" value="ECO:0000314"/>
    <property type="project" value="NTNU_SB"/>
</dbReference>
<dbReference type="GO" id="GO:0000977">
    <property type="term" value="F:RNA polymerase II transcription regulatory region sequence-specific DNA binding"/>
    <property type="evidence" value="ECO:0000250"/>
    <property type="project" value="ARUK-UCL"/>
</dbReference>
<dbReference type="GO" id="GO:0061629">
    <property type="term" value="F:RNA polymerase II-specific DNA-binding transcription factor binding"/>
    <property type="evidence" value="ECO:0000250"/>
    <property type="project" value="ARUK-UCL"/>
</dbReference>
<dbReference type="GO" id="GO:1990837">
    <property type="term" value="F:sequence-specific double-stranded DNA binding"/>
    <property type="evidence" value="ECO:0000314"/>
    <property type="project" value="ARUK-UCL"/>
</dbReference>
<dbReference type="GO" id="GO:0009887">
    <property type="term" value="P:animal organ morphogenesis"/>
    <property type="evidence" value="ECO:0000304"/>
    <property type="project" value="ProtInc"/>
</dbReference>
<dbReference type="GO" id="GO:0030154">
    <property type="term" value="P:cell differentiation"/>
    <property type="evidence" value="ECO:0007669"/>
    <property type="project" value="UniProtKB-KW"/>
</dbReference>
<dbReference type="GO" id="GO:0007399">
    <property type="term" value="P:nervous system development"/>
    <property type="evidence" value="ECO:0007669"/>
    <property type="project" value="UniProtKB-KW"/>
</dbReference>
<dbReference type="GO" id="GO:0045944">
    <property type="term" value="P:positive regulation of transcription by RNA polymerase II"/>
    <property type="evidence" value="ECO:0000314"/>
    <property type="project" value="NTNU_SB"/>
</dbReference>
<dbReference type="GO" id="GO:0006355">
    <property type="term" value="P:regulation of DNA-templated transcription"/>
    <property type="evidence" value="ECO:0000250"/>
    <property type="project" value="UniProtKB"/>
</dbReference>
<dbReference type="GO" id="GO:0006357">
    <property type="term" value="P:regulation of transcription by RNA polymerase II"/>
    <property type="evidence" value="ECO:0000318"/>
    <property type="project" value="GO_Central"/>
</dbReference>
<dbReference type="GO" id="GO:0060041">
    <property type="term" value="P:retina development in camera-type eye"/>
    <property type="evidence" value="ECO:0007669"/>
    <property type="project" value="Ensembl"/>
</dbReference>
<dbReference type="GO" id="GO:0007601">
    <property type="term" value="P:visual perception"/>
    <property type="evidence" value="ECO:0000304"/>
    <property type="project" value="ProtInc"/>
</dbReference>
<dbReference type="CDD" id="cd00086">
    <property type="entry name" value="homeodomain"/>
    <property type="match status" value="1"/>
</dbReference>
<dbReference type="FunFam" id="1.10.10.60:FF:000068">
    <property type="entry name" value="Orthodenticle homeobox 1"/>
    <property type="match status" value="1"/>
</dbReference>
<dbReference type="Gene3D" id="1.10.10.60">
    <property type="entry name" value="Homeodomain-like"/>
    <property type="match status" value="1"/>
</dbReference>
<dbReference type="InterPro" id="IPR001356">
    <property type="entry name" value="HD"/>
</dbReference>
<dbReference type="InterPro" id="IPR017970">
    <property type="entry name" value="Homeobox_CS"/>
</dbReference>
<dbReference type="InterPro" id="IPR009057">
    <property type="entry name" value="Homeodomain-like_sf"/>
</dbReference>
<dbReference type="InterPro" id="IPR013851">
    <property type="entry name" value="Otx_TF_C"/>
</dbReference>
<dbReference type="PANTHER" id="PTHR45793:SF22">
    <property type="entry name" value="CONE-ROD HOMEOBOX PROTEIN"/>
    <property type="match status" value="1"/>
</dbReference>
<dbReference type="PANTHER" id="PTHR45793">
    <property type="entry name" value="HOMEOBOX PROTEIN"/>
    <property type="match status" value="1"/>
</dbReference>
<dbReference type="Pfam" id="PF00046">
    <property type="entry name" value="Homeodomain"/>
    <property type="match status" value="1"/>
</dbReference>
<dbReference type="Pfam" id="PF03529">
    <property type="entry name" value="TF_Otx"/>
    <property type="match status" value="1"/>
</dbReference>
<dbReference type="SMART" id="SM00389">
    <property type="entry name" value="HOX"/>
    <property type="match status" value="1"/>
</dbReference>
<dbReference type="SUPFAM" id="SSF46689">
    <property type="entry name" value="Homeodomain-like"/>
    <property type="match status" value="1"/>
</dbReference>
<dbReference type="PROSITE" id="PS00027">
    <property type="entry name" value="HOMEOBOX_1"/>
    <property type="match status" value="1"/>
</dbReference>
<dbReference type="PROSITE" id="PS50071">
    <property type="entry name" value="HOMEOBOX_2"/>
    <property type="match status" value="1"/>
</dbReference>
<evidence type="ECO:0000255" key="1">
    <source>
        <dbReference type="PROSITE-ProRule" id="PRU00108"/>
    </source>
</evidence>
<evidence type="ECO:0000256" key="2">
    <source>
        <dbReference type="SAM" id="MobiDB-lite"/>
    </source>
</evidence>
<evidence type="ECO:0000269" key="3">
    <source>
    </source>
</evidence>
<evidence type="ECO:0000269" key="4">
    <source>
    </source>
</evidence>
<evidence type="ECO:0000269" key="5">
    <source>
    </source>
</evidence>
<evidence type="ECO:0000269" key="6">
    <source>
    </source>
</evidence>
<evidence type="ECO:0000269" key="7">
    <source>
    </source>
</evidence>
<evidence type="ECO:0000269" key="8">
    <source>
    </source>
</evidence>
<evidence type="ECO:0000269" key="9">
    <source>
    </source>
</evidence>
<evidence type="ECO:0000269" key="10">
    <source>
    </source>
</evidence>
<evidence type="ECO:0000269" key="11">
    <source>
    </source>
</evidence>
<evidence type="ECO:0000269" key="12">
    <source>
    </source>
</evidence>
<evidence type="ECO:0000269" key="13">
    <source>
    </source>
</evidence>
<evidence type="ECO:0000269" key="14">
    <source>
    </source>
</evidence>
<evidence type="ECO:0000269" key="15">
    <source>
    </source>
</evidence>
<evidence type="ECO:0000305" key="16"/>
<evidence type="ECO:0007829" key="17">
    <source>
        <dbReference type="PDB" id="9B8U"/>
    </source>
</evidence>
<sequence length="299" mass="32261">MMAYMNPGPHYSVNALALSGPSVDLMHQAVPYPSAPRKQRRERTTFTRSQLEELEALFAKTQYPDVYAREEVALKINLPESRVQVWFKNRRAKCRQQRQQQKQQQQPPGGQAKARPAKRKAGTSPRPSTDVCPDPLGISDSYSPPLPGPSGSPTTAVATVSIWSPASESPLPEAQRAGLVASGPSLTSAPYAMTYAPASAFCSSPSAYGSPSSYFSGLDPYLSPMVPQLGGPALSPLSGPSVGPSLAQSPTSLSGQSYGAYSPVDSLEFKDPTGTWKFTYNPMDPLDYKDQSAWKFQIL</sequence>
<keyword id="KW-0002">3D-structure</keyword>
<keyword id="KW-0010">Activator</keyword>
<keyword id="KW-0182">Cone-rod dystrophy</keyword>
<keyword id="KW-0217">Developmental protein</keyword>
<keyword id="KW-0221">Differentiation</keyword>
<keyword id="KW-0225">Disease variant</keyword>
<keyword id="KW-0238">DNA-binding</keyword>
<keyword id="KW-0371">Homeobox</keyword>
<keyword id="KW-0901">Leber congenital amaurosis</keyword>
<keyword id="KW-0524">Neurogenesis</keyword>
<keyword id="KW-0539">Nucleus</keyword>
<keyword id="KW-1267">Proteomics identification</keyword>
<keyword id="KW-1185">Reference proteome</keyword>
<keyword id="KW-0682">Retinitis pigmentosa</keyword>
<keyword id="KW-0716">Sensory transduction</keyword>
<keyword id="KW-0804">Transcription</keyword>
<keyword id="KW-0805">Transcription regulation</keyword>
<keyword id="KW-0844">Vision</keyword>
<name>CRX_HUMAN</name>
<proteinExistence type="evidence at protein level"/>
<accession>O43186</accession>
<accession>Q0QD45</accession>
<feature type="chain" id="PRO_0000048862" description="Cone-rod homeobox protein">
    <location>
        <begin position="1"/>
        <end position="299"/>
    </location>
</feature>
<feature type="DNA-binding region" description="Homeobox" evidence="1">
    <location>
        <begin position="39"/>
        <end position="98"/>
    </location>
</feature>
<feature type="region of interest" description="Disordered" evidence="2">
    <location>
        <begin position="93"/>
        <end position="155"/>
    </location>
</feature>
<feature type="compositionally biased region" description="Low complexity" evidence="2">
    <location>
        <begin position="97"/>
        <end position="114"/>
    </location>
</feature>
<feature type="sequence variant" id="VAR_076956" description="In dbSNP:rs139340178." evidence="5">
    <original>H</original>
    <variation>D</variation>
    <location>
        <position position="10"/>
    </location>
</feature>
<feature type="sequence variant" id="VAR_007946" description="In RP; dbSNP:rs61748436." evidence="5 13 14">
    <original>R</original>
    <variation>Q</variation>
    <location>
        <position position="41"/>
    </location>
</feature>
<feature type="sequence variant" id="VAR_003750" description="In CORD2; exhibits reduced DNA binding, transcriptional synergy and interaction with NRL; dbSNP:rs104894672." evidence="4 13">
    <original>R</original>
    <variation>W</variation>
    <location>
        <position position="41"/>
    </location>
</feature>
<feature type="sequence variant" id="VAR_067189" description="In LCA7; uncertain significance; dbSNP:rs863224863." evidence="10">
    <original>E</original>
    <variation>K</variation>
    <location>
        <position position="42"/>
    </location>
</feature>
<feature type="sequence variant" id="VAR_076957" description="In dbSNP:rs61748438." evidence="5">
    <original>V</original>
    <variation>I</variation>
    <location>
        <position position="66"/>
    </location>
</feature>
<feature type="sequence variant" id="VAR_003751" description="In CORD2; dbSNP:rs104894671." evidence="12 14">
    <original>E</original>
    <variation>A</variation>
    <location>
        <position position="80"/>
    </location>
</feature>
<feature type="sequence variant" id="VAR_063919" description="In LCA7; reduces NRL transactivation and reduces steady state levels of CRX and NRL; altered localization to the cytoplasm." evidence="9">
    <original>K</original>
    <variation>N</variation>
    <location>
        <position position="88"/>
    </location>
</feature>
<feature type="sequence variant" id="VAR_008714" description="In LCA7; reduced DNA-binding ability, transcriptional synergy and interaction with NRL; dbSNP:rs104894673." evidence="4 15">
    <original>R</original>
    <variation>W</variation>
    <location>
        <position position="90"/>
    </location>
</feature>
<feature type="sequence variant" id="VAR_076958" description="In RP; uncertain significance; dbSNP:rs750727986." evidence="5">
    <original>R</original>
    <variation>Q</variation>
    <location>
        <position position="115"/>
    </location>
</feature>
<feature type="sequence variant" id="VAR_008282" description="In dbSNP:rs61748441." evidence="5 11">
    <original>G</original>
    <variation>D</variation>
    <location>
        <position position="122"/>
    </location>
</feature>
<feature type="sequence variant" id="VAR_036438" description="In a breast cancer sample; somatic mutation; dbSNP:rs1165723137." evidence="7">
    <original>S</original>
    <variation>F</variation>
    <location>
        <position position="141"/>
    </location>
</feature>
<feature type="sequence variant" id="VAR_007947" description="In LCA7." evidence="14">
    <location>
        <begin position="146"/>
        <end position="149"/>
    </location>
</feature>
<feature type="sequence variant" id="VAR_067190" description="In dbSNP:rs763651232." evidence="8">
    <original>T</original>
    <variation>A</variation>
    <location>
        <position position="154"/>
    </location>
</feature>
<feature type="sequence variant" id="VAR_007948" description="In dbSNP:rs61748445." evidence="5 13">
    <original>A</original>
    <variation>T</variation>
    <location>
        <position position="158"/>
    </location>
</feature>
<feature type="sequence variant" id="VAR_007949" description="In CORD2; dbSNP:rs61748459." evidence="13">
    <original>V</original>
    <variation>M</variation>
    <location>
        <position position="242"/>
    </location>
</feature>
<feature type="helix" evidence="17">
    <location>
        <begin position="48"/>
        <end position="60"/>
    </location>
</feature>
<feature type="helix" evidence="17">
    <location>
        <begin position="66"/>
        <end position="75"/>
    </location>
</feature>
<feature type="helix" evidence="17">
    <location>
        <begin position="80"/>
        <end position="97"/>
    </location>
</feature>
<feature type="helix" evidence="17">
    <location>
        <begin position="100"/>
        <end position="103"/>
    </location>
</feature>
<reference key="1">
    <citation type="journal article" date="1997" name="Cell">
        <title>Cone-rod dystrophy due to mutations in a novel photoreceptor-specific homeobox gene (CRX) essential for maintenance of the photoreceptor.</title>
        <authorList>
            <person name="Freund C.L."/>
            <person name="Gregory-Evans C.Y."/>
            <person name="Furukawa T."/>
            <person name="Papaioannou M."/>
            <person name="Looser J."/>
            <person name="Ploder L."/>
            <person name="Bellingham J."/>
            <person name="Ng D."/>
            <person name="Herbrick J.-A.S."/>
            <person name="Duncan A."/>
            <person name="Scherer S.W."/>
            <person name="Tsui L.-C."/>
            <person name="Loutradis-Anagnostou A."/>
            <person name="Jacobson S.G."/>
            <person name="Cepko C.L."/>
            <person name="Bhattacharya S.S."/>
            <person name="McInnes R.R."/>
        </authorList>
    </citation>
    <scope>NUCLEOTIDE SEQUENCE [GENOMIC DNA]</scope>
    <scope>VARIANT CORD2 ALA-80</scope>
</reference>
<reference key="2">
    <citation type="submission" date="2003-05" db="EMBL/GenBank/DDBJ databases">
        <title>Cloning of human full-length CDSs in BD Creator(TM) system donor vector.</title>
        <authorList>
            <person name="Kalnine N."/>
            <person name="Chen X."/>
            <person name="Rolfs A."/>
            <person name="Halleck A."/>
            <person name="Hines L."/>
            <person name="Eisenstein S."/>
            <person name="Koundinya M."/>
            <person name="Raphael J."/>
            <person name="Moreira D."/>
            <person name="Kelley T."/>
            <person name="LaBaer J."/>
            <person name="Lin Y."/>
            <person name="Phelan M."/>
            <person name="Farmer A."/>
        </authorList>
    </citation>
    <scope>NUCLEOTIDE SEQUENCE [LARGE SCALE MRNA]</scope>
</reference>
<reference key="3">
    <citation type="journal article" date="2004" name="Nature">
        <title>The DNA sequence and biology of human chromosome 19.</title>
        <authorList>
            <person name="Grimwood J."/>
            <person name="Gordon L.A."/>
            <person name="Olsen A.S."/>
            <person name="Terry A."/>
            <person name="Schmutz J."/>
            <person name="Lamerdin J.E."/>
            <person name="Hellsten U."/>
            <person name="Goodstein D."/>
            <person name="Couronne O."/>
            <person name="Tran-Gyamfi M."/>
            <person name="Aerts A."/>
            <person name="Altherr M."/>
            <person name="Ashworth L."/>
            <person name="Bajorek E."/>
            <person name="Black S."/>
            <person name="Branscomb E."/>
            <person name="Caenepeel S."/>
            <person name="Carrano A.V."/>
            <person name="Caoile C."/>
            <person name="Chan Y.M."/>
            <person name="Christensen M."/>
            <person name="Cleland C.A."/>
            <person name="Copeland A."/>
            <person name="Dalin E."/>
            <person name="Dehal P."/>
            <person name="Denys M."/>
            <person name="Detter J.C."/>
            <person name="Escobar J."/>
            <person name="Flowers D."/>
            <person name="Fotopulos D."/>
            <person name="Garcia C."/>
            <person name="Georgescu A.M."/>
            <person name="Glavina T."/>
            <person name="Gomez M."/>
            <person name="Gonzales E."/>
            <person name="Groza M."/>
            <person name="Hammon N."/>
            <person name="Hawkins T."/>
            <person name="Haydu L."/>
            <person name="Ho I."/>
            <person name="Huang W."/>
            <person name="Israni S."/>
            <person name="Jett J."/>
            <person name="Kadner K."/>
            <person name="Kimball H."/>
            <person name="Kobayashi A."/>
            <person name="Larionov V."/>
            <person name="Leem S.-H."/>
            <person name="Lopez F."/>
            <person name="Lou Y."/>
            <person name="Lowry S."/>
            <person name="Malfatti S."/>
            <person name="Martinez D."/>
            <person name="McCready P.M."/>
            <person name="Medina C."/>
            <person name="Morgan J."/>
            <person name="Nelson K."/>
            <person name="Nolan M."/>
            <person name="Ovcharenko I."/>
            <person name="Pitluck S."/>
            <person name="Pollard M."/>
            <person name="Popkie A.P."/>
            <person name="Predki P."/>
            <person name="Quan G."/>
            <person name="Ramirez L."/>
            <person name="Rash S."/>
            <person name="Retterer J."/>
            <person name="Rodriguez A."/>
            <person name="Rogers S."/>
            <person name="Salamov A."/>
            <person name="Salazar A."/>
            <person name="She X."/>
            <person name="Smith D."/>
            <person name="Slezak T."/>
            <person name="Solovyev V."/>
            <person name="Thayer N."/>
            <person name="Tice H."/>
            <person name="Tsai M."/>
            <person name="Ustaszewska A."/>
            <person name="Vo N."/>
            <person name="Wagner M."/>
            <person name="Wheeler J."/>
            <person name="Wu K."/>
            <person name="Xie G."/>
            <person name="Yang J."/>
            <person name="Dubchak I."/>
            <person name="Furey T.S."/>
            <person name="DeJong P."/>
            <person name="Dickson M."/>
            <person name="Gordon D."/>
            <person name="Eichler E.E."/>
            <person name="Pennacchio L.A."/>
            <person name="Richardson P."/>
            <person name="Stubbs L."/>
            <person name="Rokhsar D.S."/>
            <person name="Myers R.M."/>
            <person name="Rubin E.M."/>
            <person name="Lucas S.M."/>
        </authorList>
    </citation>
    <scope>NUCLEOTIDE SEQUENCE [LARGE SCALE GENOMIC DNA]</scope>
</reference>
<reference key="4">
    <citation type="journal article" date="2004" name="Genome Res.">
        <title>The status, quality, and expansion of the NIH full-length cDNA project: the Mammalian Gene Collection (MGC).</title>
        <authorList>
            <consortium name="The MGC Project Team"/>
        </authorList>
    </citation>
    <scope>NUCLEOTIDE SEQUENCE [LARGE SCALE MRNA]</scope>
    <source>
        <tissue>Eye</tissue>
    </source>
</reference>
<reference key="5">
    <citation type="journal article" date="2007" name="BMC Genomics">
        <title>Mapping of transcription start sites of human retina expressed genes.</title>
        <authorList>
            <person name="Roni V."/>
            <person name="Carpio R."/>
            <person name="Wissinger B."/>
        </authorList>
    </citation>
    <scope>NUCLEOTIDE SEQUENCE [LARGE SCALE MRNA] OF 1-54</scope>
    <source>
        <tissue>Retina</tissue>
    </source>
</reference>
<reference key="6">
    <citation type="journal article" date="2000" name="J. Biol. Chem.">
        <title>Both PCE-1/RX and OTX/CRX interactions are necessary for photoreceptor-specific gene expression.</title>
        <authorList>
            <person name="Kimura A."/>
            <person name="Singh D."/>
            <person name="Wawrousek E.F."/>
            <person name="Kikuchi M."/>
            <person name="Nakamura M."/>
            <person name="Shinohara T."/>
        </authorList>
    </citation>
    <scope>FUNCTION</scope>
</reference>
<reference key="7">
    <citation type="journal article" date="2000" name="J. Biol. Chem.">
        <title>The leucine zipper of NRL interacts with the CRX homeodomain. A possible mechanism of transcriptional synergy in rhodopsin regulation.</title>
        <authorList>
            <person name="Mitton K.P."/>
            <person name="Swain P.K."/>
            <person name="Chen S."/>
            <person name="Xu S."/>
            <person name="Zack D.J."/>
            <person name="Swaroop A."/>
        </authorList>
    </citation>
    <scope>INTERACTION WITH NRL</scope>
    <scope>CHARACTERIZATION OF VARIANT CORD2 TRP-41</scope>
    <scope>CHARACTERIZATION OF VARIANT LCA7 TRP-90</scope>
</reference>
<reference key="8">
    <citation type="journal article" date="2004" name="Hum. Mol. Genet.">
        <title>QRX, a novel homeobox gene, modulates photoreceptor gene expression.</title>
        <authorList>
            <person name="Wang Q.-L."/>
            <person name="Chen S."/>
            <person name="Esumi N."/>
            <person name="Swain P.K."/>
            <person name="Haines H.S."/>
            <person name="Peng G."/>
            <person name="Melia B.M."/>
            <person name="McIntosh I."/>
            <person name="Heckenlively J.R."/>
            <person name="Jacobson S.G."/>
            <person name="Stone E.M."/>
            <person name="Swaroop A."/>
            <person name="Zack D.J."/>
        </authorList>
    </citation>
    <scope>INTERACTION WITH RAX2</scope>
</reference>
<reference key="9">
    <citation type="journal article" date="1997" name="Neuron">
        <title>Mutations in the cone-rod homeobox gene are associated with the cone-rod dystrophy photoreceptor degeneration.</title>
        <authorList>
            <person name="Swain P.K."/>
            <person name="Chen S."/>
            <person name="Wang Q.-L."/>
            <person name="Affatigato L.M."/>
            <person name="Coats C.L."/>
            <person name="Brady K.D."/>
            <person name="Fishman G.A."/>
            <person name="Jacobson S.G."/>
            <person name="Swaroop A."/>
            <person name="Stone E."/>
            <person name="Sieving P.A."/>
            <person name="Zack D.J."/>
        </authorList>
    </citation>
    <scope>VARIANTS CORD2 TRP-41 AND MET-242</scope>
    <scope>VARIANT RP GLN-41</scope>
    <scope>VARIANT THR-158</scope>
</reference>
<reference key="10">
    <citation type="journal article" date="1998" name="Am. J. Hum. Genet.">
        <title>A range of clinical phenotypes associated with mutations in CRX, a photoreceptor transcription-factor gene.</title>
        <authorList>
            <person name="Sohocki M.M."/>
            <person name="Sullivan L.S."/>
            <person name="Mintz-Hittner H.A."/>
            <person name="Birch D."/>
            <person name="Heckenlively J.R."/>
            <person name="Freund C.L."/>
            <person name="McInnes R.R."/>
            <person name="Daiger S.P."/>
        </authorList>
    </citation>
    <scope>VARIANT RP GLN-41</scope>
    <scope>VARIANT CORD2 ALA-80</scope>
    <scope>VARIANT LCA7 146-LEU--PRO-149 DEL</scope>
</reference>
<reference key="11">
    <citation type="journal article" date="1999" name="Hum. Mol. Genet.">
        <title>Leber congenital amaurosis caused by a homozygous mutation (R90W) in the homeodomain of the retinal transcription factor CRX: direct evidence for the involvement of CRX in the development of photoreceptor function.</title>
        <authorList>
            <person name="Swaroop A."/>
            <person name="Wang Q.-L."/>
            <person name="Wu W."/>
            <person name="Cook J."/>
            <person name="Coats C."/>
            <person name="Xu S."/>
            <person name="Chen S."/>
            <person name="Zack D.J."/>
            <person name="Sieving P.A."/>
        </authorList>
    </citation>
    <scope>VARIANT LCA7 TRP-90</scope>
</reference>
<reference key="12">
    <citation type="journal article" date="2001" name="Hum. Mutat.">
        <title>Prevalence of mutations causing retinitis pigmentosa and other inherited retinopathies.</title>
        <authorList>
            <person name="Sohocki M.M."/>
            <person name="Daiger S.P."/>
            <person name="Bowne S.J."/>
            <person name="Rodriquez J.A."/>
            <person name="Northrup H."/>
            <person name="Heckenlively J.R."/>
            <person name="Birch D.G."/>
            <person name="Mintz-Hittner H."/>
            <person name="Ruiz R.S."/>
            <person name="Lewis R.A."/>
            <person name="Saperstein D.A."/>
            <person name="Sullivan L.S."/>
        </authorList>
    </citation>
    <scope>VARIANTS ASP-10; ILE-66; ASP-122 AND THR-158</scope>
    <scope>VARIANTS RP GLN-41 AND GLN-115</scope>
</reference>
<reference key="13">
    <citation type="journal article" date="2006" name="Science">
        <title>The consensus coding sequences of human breast and colorectal cancers.</title>
        <authorList>
            <person name="Sjoeblom T."/>
            <person name="Jones S."/>
            <person name="Wood L.D."/>
            <person name="Parsons D.W."/>
            <person name="Lin J."/>
            <person name="Barber T.D."/>
            <person name="Mandelker D."/>
            <person name="Leary R.J."/>
            <person name="Ptak J."/>
            <person name="Silliman N."/>
            <person name="Szabo S."/>
            <person name="Buckhaults P."/>
            <person name="Farrell C."/>
            <person name="Meeh P."/>
            <person name="Markowitz S.D."/>
            <person name="Willis J."/>
            <person name="Dawson D."/>
            <person name="Willson J.K.V."/>
            <person name="Gazdar A.F."/>
            <person name="Hartigan J."/>
            <person name="Wu L."/>
            <person name="Liu C."/>
            <person name="Parmigiani G."/>
            <person name="Park B.H."/>
            <person name="Bachman K.E."/>
            <person name="Papadopoulos N."/>
            <person name="Vogelstein B."/>
            <person name="Kinzler K.W."/>
            <person name="Velculescu V.E."/>
        </authorList>
    </citation>
    <scope>VARIANT [LARGE SCALE ANALYSIS] PHE-141</scope>
</reference>
<reference key="14">
    <citation type="journal article" date="2008" name="Mol. Vis.">
        <title>Molecular characterization of Leber congenital amaurosis in Koreans.</title>
        <authorList>
            <person name="Seong M.W."/>
            <person name="Kim S.Y."/>
            <person name="Yu Y.S."/>
            <person name="Hwang J.M."/>
            <person name="Kim J.Y."/>
            <person name="Park S.S."/>
        </authorList>
    </citation>
    <scope>VARIANT ALA-154</scope>
</reference>
<reference key="15">
    <citation type="journal article" date="2010" name="Hum. Mutat.">
        <title>Two novel CRX mutant proteins causing autosomal dominant Leber congenital amaurosis interact differently with NRL.</title>
        <authorList>
            <person name="Nichols L.L. II"/>
            <person name="Alur R.P."/>
            <person name="Boobalan E."/>
            <person name="Sergeev Y.V."/>
            <person name="Caruso R.C."/>
            <person name="Stone E.M."/>
            <person name="Swaroop A."/>
            <person name="Johnson M.A."/>
            <person name="Brooks B.P."/>
        </authorList>
    </citation>
    <scope>VARIANT LCA7 ASN-88</scope>
    <scope>CHARACTERIZATION OF VARIANT LCA7 ASN-88</scope>
</reference>
<reference key="16">
    <citation type="journal article" date="2011" name="PLoS ONE">
        <title>Detection of variants in 15 genes in 87 unrelated Chinese patients with Leber congenital amaurosis.</title>
        <authorList>
            <person name="Li L."/>
            <person name="Xiao X."/>
            <person name="Li S."/>
            <person name="Jia X."/>
            <person name="Wang P."/>
            <person name="Guo X."/>
            <person name="Jiao X."/>
            <person name="Zhang Q."/>
            <person name="Hejtmancik J.F."/>
        </authorList>
    </citation>
    <scope>VARIANT LCA7 LYS-42</scope>
</reference>
<reference key="17">
    <citation type="journal article" date="2016" name="Nature">
        <title>Analysis of protein-coding genetic variation in 60,706 humans.</title>
        <authorList>
            <consortium name="Exome Aggregation Consortium"/>
            <person name="Lek M."/>
            <person name="Karczewski K.J."/>
            <person name="Minikel E.V."/>
            <person name="Samocha K.E."/>
            <person name="Banks E."/>
            <person name="Fennell T."/>
            <person name="O'Donnell-Luria A.H."/>
            <person name="Ware J.S."/>
            <person name="Hill A.J."/>
            <person name="Cummings B.B."/>
            <person name="Tukiainen T."/>
            <person name="Birnbaum D.P."/>
            <person name="Kosmicki J.A."/>
            <person name="Duncan L.E."/>
            <person name="Estrada K."/>
            <person name="Zhao F."/>
            <person name="Zou J."/>
            <person name="Pierce-Hoffman E."/>
            <person name="Berghout J."/>
            <person name="Cooper D.N."/>
            <person name="Deflaux N."/>
            <person name="DePristo M."/>
            <person name="Do R."/>
            <person name="Flannick J."/>
            <person name="Fromer M."/>
            <person name="Gauthier L."/>
            <person name="Goldstein J."/>
            <person name="Gupta N."/>
            <person name="Howrigan D."/>
            <person name="Kiezun A."/>
            <person name="Kurki M.I."/>
            <person name="Moonshine A.L."/>
            <person name="Natarajan P."/>
            <person name="Orozco L."/>
            <person name="Peloso G.M."/>
            <person name="Poplin R."/>
            <person name="Rivas M.A."/>
            <person name="Ruano-Rubio V."/>
            <person name="Rose S.A."/>
            <person name="Ruderfer D.M."/>
            <person name="Shakir K."/>
            <person name="Stenson P.D."/>
            <person name="Stevens C."/>
            <person name="Thomas B.P."/>
            <person name="Tiao G."/>
            <person name="Tusie-Luna M.T."/>
            <person name="Weisburd B."/>
            <person name="Won H.H."/>
            <person name="Yu D."/>
            <person name="Altshuler D.M."/>
            <person name="Ardissino D."/>
            <person name="Boehnke M."/>
            <person name="Danesh J."/>
            <person name="Donnelly S."/>
            <person name="Elosua R."/>
            <person name="Florez J.C."/>
            <person name="Gabriel S.B."/>
            <person name="Getz G."/>
            <person name="Glatt S.J."/>
            <person name="Hultman C.M."/>
            <person name="Kathiresan S."/>
            <person name="Laakso M."/>
            <person name="McCarroll S."/>
            <person name="McCarthy M.I."/>
            <person name="McGovern D."/>
            <person name="McPherson R."/>
            <person name="Neale B.M."/>
            <person name="Palotie A."/>
            <person name="Purcell S.M."/>
            <person name="Saleheen D."/>
            <person name="Scharf J.M."/>
            <person name="Sklar P."/>
            <person name="Sullivan P.F."/>
            <person name="Tuomilehto J."/>
            <person name="Tsuang M.T."/>
            <person name="Watkins H.C."/>
            <person name="Wilson J.G."/>
            <person name="Daly M.J."/>
            <person name="MacArthur D.G."/>
        </authorList>
    </citation>
    <scope>VARIANT ASP-122</scope>
</reference>
<gene>
    <name type="primary">CRX</name>
    <name type="synonym">CORD2</name>
</gene>
<protein>
    <recommendedName>
        <fullName>Cone-rod homeobox protein</fullName>
    </recommendedName>
</protein>
<organism>
    <name type="scientific">Homo sapiens</name>
    <name type="common">Human</name>
    <dbReference type="NCBI Taxonomy" id="9606"/>
    <lineage>
        <taxon>Eukaryota</taxon>
        <taxon>Metazoa</taxon>
        <taxon>Chordata</taxon>
        <taxon>Craniata</taxon>
        <taxon>Vertebrata</taxon>
        <taxon>Euteleostomi</taxon>
        <taxon>Mammalia</taxon>
        <taxon>Eutheria</taxon>
        <taxon>Euarchontoglires</taxon>
        <taxon>Primates</taxon>
        <taxon>Haplorrhini</taxon>
        <taxon>Catarrhini</taxon>
        <taxon>Hominidae</taxon>
        <taxon>Homo</taxon>
    </lineage>
</organism>